<proteinExistence type="evidence at protein level"/>
<keyword id="KW-0002">3D-structure</keyword>
<keyword id="KW-0414">Isoprene biosynthesis</keyword>
<keyword id="KW-0548">Nucleotidyltransferase</keyword>
<keyword id="KW-1185">Reference proteome</keyword>
<keyword id="KW-0808">Transferase</keyword>
<name>ISPD_MYCTU</name>
<organism>
    <name type="scientific">Mycobacterium tuberculosis (strain ATCC 25618 / H37Rv)</name>
    <dbReference type="NCBI Taxonomy" id="83332"/>
    <lineage>
        <taxon>Bacteria</taxon>
        <taxon>Bacillati</taxon>
        <taxon>Actinomycetota</taxon>
        <taxon>Actinomycetes</taxon>
        <taxon>Mycobacteriales</taxon>
        <taxon>Mycobacteriaceae</taxon>
        <taxon>Mycobacterium</taxon>
        <taxon>Mycobacterium tuberculosis complex</taxon>
    </lineage>
</organism>
<reference key="1">
    <citation type="journal article" date="1998" name="Nature">
        <title>Deciphering the biology of Mycobacterium tuberculosis from the complete genome sequence.</title>
        <authorList>
            <person name="Cole S.T."/>
            <person name="Brosch R."/>
            <person name="Parkhill J."/>
            <person name="Garnier T."/>
            <person name="Churcher C.M."/>
            <person name="Harris D.E."/>
            <person name="Gordon S.V."/>
            <person name="Eiglmeier K."/>
            <person name="Gas S."/>
            <person name="Barry C.E. III"/>
            <person name="Tekaia F."/>
            <person name="Badcock K."/>
            <person name="Basham D."/>
            <person name="Brown D."/>
            <person name="Chillingworth T."/>
            <person name="Connor R."/>
            <person name="Davies R.M."/>
            <person name="Devlin K."/>
            <person name="Feltwell T."/>
            <person name="Gentles S."/>
            <person name="Hamlin N."/>
            <person name="Holroyd S."/>
            <person name="Hornsby T."/>
            <person name="Jagels K."/>
            <person name="Krogh A."/>
            <person name="McLean J."/>
            <person name="Moule S."/>
            <person name="Murphy L.D."/>
            <person name="Oliver S."/>
            <person name="Osborne J."/>
            <person name="Quail M.A."/>
            <person name="Rajandream M.A."/>
            <person name="Rogers J."/>
            <person name="Rutter S."/>
            <person name="Seeger K."/>
            <person name="Skelton S."/>
            <person name="Squares S."/>
            <person name="Squares R."/>
            <person name="Sulston J.E."/>
            <person name="Taylor K."/>
            <person name="Whitehead S."/>
            <person name="Barrell B.G."/>
        </authorList>
    </citation>
    <scope>NUCLEOTIDE SEQUENCE [LARGE SCALE GENOMIC DNA]</scope>
    <source>
        <strain>ATCC 25618 / H37Rv</strain>
    </source>
</reference>
<reference key="2">
    <citation type="journal article" date="2008" name="BMC Syst. Biol.">
        <title>targetTB: a target identification pipeline for Mycobacterium tuberculosis through an interactome, reactome and genome-scale structural analysis.</title>
        <authorList>
            <person name="Raman K."/>
            <person name="Yeturu K."/>
            <person name="Chandra N."/>
        </authorList>
    </citation>
    <scope>IDENTIFICATION AS A DRUG TARGET [LARGE SCALE ANALYSIS]</scope>
</reference>
<reference key="3">
    <citation type="journal article" date="2011" name="Mol. Cell. Proteomics">
        <title>Proteogenomic analysis of Mycobacterium tuberculosis by high resolution mass spectrometry.</title>
        <authorList>
            <person name="Kelkar D.S."/>
            <person name="Kumar D."/>
            <person name="Kumar P."/>
            <person name="Balakrishnan L."/>
            <person name="Muthusamy B."/>
            <person name="Yadav A.K."/>
            <person name="Shrivastava P."/>
            <person name="Marimuthu A."/>
            <person name="Anand S."/>
            <person name="Sundaram H."/>
            <person name="Kingsbury R."/>
            <person name="Harsha H.C."/>
            <person name="Nair B."/>
            <person name="Prasad T.S."/>
            <person name="Chauhan D.S."/>
            <person name="Katoch K."/>
            <person name="Katoch V.M."/>
            <person name="Kumar P."/>
            <person name="Chaerkady R."/>
            <person name="Ramachandran S."/>
            <person name="Dash D."/>
            <person name="Pandey A."/>
        </authorList>
    </citation>
    <scope>IDENTIFICATION BY MASS SPECTROMETRY [LARGE SCALE ANALYSIS]</scope>
    <source>
        <strain>ATCC 25618 / H37Rv</strain>
    </source>
</reference>
<evidence type="ECO:0000255" key="1">
    <source>
        <dbReference type="HAMAP-Rule" id="MF_00108"/>
    </source>
</evidence>
<evidence type="ECO:0007829" key="2">
    <source>
        <dbReference type="PDB" id="3Q7U"/>
    </source>
</evidence>
<evidence type="ECO:0007829" key="3">
    <source>
        <dbReference type="PDB" id="3Q80"/>
    </source>
</evidence>
<dbReference type="EC" id="2.7.7.60" evidence="1"/>
<dbReference type="EMBL" id="AL123456">
    <property type="protein sequence ID" value="CCP46405.1"/>
    <property type="molecule type" value="Genomic_DNA"/>
</dbReference>
<dbReference type="PIR" id="D70607">
    <property type="entry name" value="D70607"/>
</dbReference>
<dbReference type="RefSeq" id="NP_218099.1">
    <property type="nucleotide sequence ID" value="NC_000962.3"/>
</dbReference>
<dbReference type="RefSeq" id="WP_003419436.1">
    <property type="nucleotide sequence ID" value="NZ_NVQJ01000014.1"/>
</dbReference>
<dbReference type="PDB" id="2XWN">
    <property type="method" value="X-ray"/>
    <property type="resolution" value="2.90 A"/>
    <property type="chains" value="A/B=1-229"/>
</dbReference>
<dbReference type="PDB" id="3OKR">
    <property type="method" value="X-ray"/>
    <property type="resolution" value="2.40 A"/>
    <property type="chains" value="A/B/C/D=1-231"/>
</dbReference>
<dbReference type="PDB" id="3Q7U">
    <property type="method" value="X-ray"/>
    <property type="resolution" value="2.10 A"/>
    <property type="chains" value="A/B=2-231"/>
</dbReference>
<dbReference type="PDB" id="3Q80">
    <property type="method" value="X-ray"/>
    <property type="resolution" value="2.00 A"/>
    <property type="chains" value="A/B=2-231"/>
</dbReference>
<dbReference type="PDBsum" id="2XWN"/>
<dbReference type="PDBsum" id="3OKR"/>
<dbReference type="PDBsum" id="3Q7U"/>
<dbReference type="PDBsum" id="3Q80"/>
<dbReference type="SMR" id="P9WKG9"/>
<dbReference type="FunCoup" id="P9WKG9">
    <property type="interactions" value="256"/>
</dbReference>
<dbReference type="STRING" id="83332.Rv3582c"/>
<dbReference type="SwissLipids" id="SLP:000001165"/>
<dbReference type="PaxDb" id="83332-Rv3582c"/>
<dbReference type="DNASU" id="887787"/>
<dbReference type="GeneID" id="45427570"/>
<dbReference type="GeneID" id="887787"/>
<dbReference type="KEGG" id="mtu:Rv3582c"/>
<dbReference type="KEGG" id="mtv:RVBD_3582c"/>
<dbReference type="TubercuList" id="Rv3582c"/>
<dbReference type="eggNOG" id="COG1211">
    <property type="taxonomic scope" value="Bacteria"/>
</dbReference>
<dbReference type="InParanoid" id="P9WKG9"/>
<dbReference type="OrthoDB" id="9802561at2"/>
<dbReference type="PhylomeDB" id="P9WKG9"/>
<dbReference type="BRENDA" id="2.7.7.60">
    <property type="organism ID" value="3445"/>
</dbReference>
<dbReference type="UniPathway" id="UPA00056">
    <property type="reaction ID" value="UER00093"/>
</dbReference>
<dbReference type="EvolutionaryTrace" id="P9WKG9"/>
<dbReference type="Proteomes" id="UP000001584">
    <property type="component" value="Chromosome"/>
</dbReference>
<dbReference type="GO" id="GO:0005886">
    <property type="term" value="C:plasma membrane"/>
    <property type="evidence" value="ECO:0007005"/>
    <property type="project" value="MTBBASE"/>
</dbReference>
<dbReference type="GO" id="GO:0050518">
    <property type="term" value="F:2-C-methyl-D-erythritol 4-phosphate cytidylyltransferase activity"/>
    <property type="evidence" value="ECO:0000314"/>
    <property type="project" value="MTBBASE"/>
</dbReference>
<dbReference type="GO" id="GO:0002135">
    <property type="term" value="F:CTP binding"/>
    <property type="evidence" value="ECO:0000314"/>
    <property type="project" value="MTBBASE"/>
</dbReference>
<dbReference type="GO" id="GO:0000287">
    <property type="term" value="F:magnesium ion binding"/>
    <property type="evidence" value="ECO:0000314"/>
    <property type="project" value="MTBBASE"/>
</dbReference>
<dbReference type="GO" id="GO:0030145">
    <property type="term" value="F:manganese ion binding"/>
    <property type="evidence" value="ECO:0000314"/>
    <property type="project" value="MTBBASE"/>
</dbReference>
<dbReference type="GO" id="GO:0008270">
    <property type="term" value="F:zinc ion binding"/>
    <property type="evidence" value="ECO:0000314"/>
    <property type="project" value="MTBBASE"/>
</dbReference>
<dbReference type="GO" id="GO:0051484">
    <property type="term" value="P:isopentenyl diphosphate biosynthetic process, methylerythritol 4-phosphate pathway involved in terpenoid biosynthetic process"/>
    <property type="evidence" value="ECO:0000314"/>
    <property type="project" value="MTBBASE"/>
</dbReference>
<dbReference type="CDD" id="cd02516">
    <property type="entry name" value="CDP-ME_synthetase"/>
    <property type="match status" value="1"/>
</dbReference>
<dbReference type="FunFam" id="3.90.550.10:FF:000208">
    <property type="entry name" value="2-C-methyl-D-erythritol 4-phosphate cytidylyltransferase"/>
    <property type="match status" value="1"/>
</dbReference>
<dbReference type="Gene3D" id="3.90.550.10">
    <property type="entry name" value="Spore Coat Polysaccharide Biosynthesis Protein SpsA, Chain A"/>
    <property type="match status" value="1"/>
</dbReference>
<dbReference type="HAMAP" id="MF_00108">
    <property type="entry name" value="IspD"/>
    <property type="match status" value="1"/>
</dbReference>
<dbReference type="InterPro" id="IPR001228">
    <property type="entry name" value="IspD"/>
</dbReference>
<dbReference type="InterPro" id="IPR034683">
    <property type="entry name" value="IspD/TarI"/>
</dbReference>
<dbReference type="InterPro" id="IPR050088">
    <property type="entry name" value="IspD/TarI_cytidylyltransf_bact"/>
</dbReference>
<dbReference type="InterPro" id="IPR018294">
    <property type="entry name" value="ISPD_synthase_CS"/>
</dbReference>
<dbReference type="InterPro" id="IPR029044">
    <property type="entry name" value="Nucleotide-diphossugar_trans"/>
</dbReference>
<dbReference type="NCBIfam" id="TIGR00453">
    <property type="entry name" value="ispD"/>
    <property type="match status" value="1"/>
</dbReference>
<dbReference type="PANTHER" id="PTHR32125">
    <property type="entry name" value="2-C-METHYL-D-ERYTHRITOL 4-PHOSPHATE CYTIDYLYLTRANSFERASE, CHLOROPLASTIC"/>
    <property type="match status" value="1"/>
</dbReference>
<dbReference type="PANTHER" id="PTHR32125:SF4">
    <property type="entry name" value="2-C-METHYL-D-ERYTHRITOL 4-PHOSPHATE CYTIDYLYLTRANSFERASE, CHLOROPLASTIC"/>
    <property type="match status" value="1"/>
</dbReference>
<dbReference type="Pfam" id="PF01128">
    <property type="entry name" value="IspD"/>
    <property type="match status" value="1"/>
</dbReference>
<dbReference type="SUPFAM" id="SSF53448">
    <property type="entry name" value="Nucleotide-diphospho-sugar transferases"/>
    <property type="match status" value="1"/>
</dbReference>
<dbReference type="PROSITE" id="PS01295">
    <property type="entry name" value="ISPD"/>
    <property type="match status" value="1"/>
</dbReference>
<comment type="function">
    <text evidence="1">Catalyzes the formation of 4-diphosphocytidyl-2-C-methyl-D-erythritol from CTP and 2-C-methyl-D-erythritol 4-phosphate (MEP).</text>
</comment>
<comment type="catalytic activity">
    <reaction evidence="1">
        <text>2-C-methyl-D-erythritol 4-phosphate + CTP + H(+) = 4-CDP-2-C-methyl-D-erythritol + diphosphate</text>
        <dbReference type="Rhea" id="RHEA:13429"/>
        <dbReference type="ChEBI" id="CHEBI:15378"/>
        <dbReference type="ChEBI" id="CHEBI:33019"/>
        <dbReference type="ChEBI" id="CHEBI:37563"/>
        <dbReference type="ChEBI" id="CHEBI:57823"/>
        <dbReference type="ChEBI" id="CHEBI:58262"/>
        <dbReference type="EC" id="2.7.7.60"/>
    </reaction>
</comment>
<comment type="pathway">
    <text evidence="1">Isoprenoid biosynthesis; isopentenyl diphosphate biosynthesis via DXP pathway; isopentenyl diphosphate from 1-deoxy-D-xylulose 5-phosphate: step 2/6.</text>
</comment>
<comment type="miscellaneous">
    <text>Was identified as a high-confidence drug target.</text>
</comment>
<comment type="similarity">
    <text evidence="1">Belongs to the IspD/TarI cytidylyltransferase family. IspD subfamily.</text>
</comment>
<accession>P9WKG9</accession>
<accession>L0TG52</accession>
<accession>P96864</accession>
<protein>
    <recommendedName>
        <fullName evidence="1">2-C-methyl-D-erythritol 4-phosphate cytidylyltransferase</fullName>
        <ecNumber evidence="1">2.7.7.60</ecNumber>
    </recommendedName>
    <alternativeName>
        <fullName evidence="1">4-diphosphocytidyl-2C-methyl-D-erythritol synthase</fullName>
    </alternativeName>
    <alternativeName>
        <fullName evidence="1">MEP cytidylyltransferase</fullName>
        <shortName evidence="1">MCT</shortName>
    </alternativeName>
</protein>
<gene>
    <name evidence="1" type="primary">ispD</name>
    <name type="ordered locus">Rv3582c</name>
    <name type="ORF">MTCY06G11.29c</name>
</gene>
<sequence length="231" mass="24074">MVREAGEVVAIVPAAGSGERLAVGVPKAFYQLDGQTLIERAVDGLLDSGVVDTVVVAVPADRTDEARQILGHRAMIVAGGSNRTDTVNLALTVLSGTAEPEFVLVHDAARALTPPALVARVVEALRDGYAAVVPVLPLSDTIKAVDANGVVLGTPERAGLRAVQTPQGFTTDLLLRSYQRGSLDLPAAEYTDDASLVEHIGGQVQVVDGDPLAFKITTKLDLLLAQAIVRG</sequence>
<feature type="chain" id="PRO_0000075592" description="2-C-methyl-D-erythritol 4-phosphate cytidylyltransferase">
    <location>
        <begin position="1"/>
        <end position="231"/>
    </location>
</feature>
<feature type="site" description="Transition state stabilizer" evidence="1">
    <location>
        <position position="20"/>
    </location>
</feature>
<feature type="site" description="Transition state stabilizer" evidence="1">
    <location>
        <position position="27"/>
    </location>
</feature>
<feature type="site" description="Positions MEP for the nucleophilic attack" evidence="1">
    <location>
        <position position="157"/>
    </location>
</feature>
<feature type="site" description="Positions MEP for the nucleophilic attack" evidence="1">
    <location>
        <position position="215"/>
    </location>
</feature>
<feature type="strand" evidence="3">
    <location>
        <begin position="8"/>
        <end position="13"/>
    </location>
</feature>
<feature type="turn" evidence="3">
    <location>
        <begin position="19"/>
        <end position="21"/>
    </location>
</feature>
<feature type="strand" evidence="3">
    <location>
        <begin position="23"/>
        <end position="25"/>
    </location>
</feature>
<feature type="helix" evidence="3">
    <location>
        <begin position="27"/>
        <end position="29"/>
    </location>
</feature>
<feature type="helix" evidence="3">
    <location>
        <begin position="37"/>
        <end position="47"/>
    </location>
</feature>
<feature type="strand" evidence="3">
    <location>
        <begin position="53"/>
        <end position="58"/>
    </location>
</feature>
<feature type="helix" evidence="3">
    <location>
        <begin position="60"/>
        <end position="62"/>
    </location>
</feature>
<feature type="helix" evidence="3">
    <location>
        <begin position="63"/>
        <end position="70"/>
    </location>
</feature>
<feature type="helix" evidence="3">
    <location>
        <begin position="71"/>
        <end position="73"/>
    </location>
</feature>
<feature type="strand" evidence="3">
    <location>
        <begin position="75"/>
        <end position="78"/>
    </location>
</feature>
<feature type="helix" evidence="3">
    <location>
        <begin position="83"/>
        <end position="91"/>
    </location>
</feature>
<feature type="helix" evidence="3">
    <location>
        <begin position="92"/>
        <end position="94"/>
    </location>
</feature>
<feature type="strand" evidence="2">
    <location>
        <begin position="96"/>
        <end position="98"/>
    </location>
</feature>
<feature type="strand" evidence="3">
    <location>
        <begin position="101"/>
        <end position="105"/>
    </location>
</feature>
<feature type="helix" evidence="3">
    <location>
        <begin position="115"/>
        <end position="126"/>
    </location>
</feature>
<feature type="strand" evidence="3">
    <location>
        <begin position="130"/>
        <end position="136"/>
    </location>
</feature>
<feature type="strand" evidence="3">
    <location>
        <begin position="142"/>
        <end position="145"/>
    </location>
</feature>
<feature type="strand" evidence="3">
    <location>
        <begin position="149"/>
        <end position="153"/>
    </location>
</feature>
<feature type="helix" evidence="3">
    <location>
        <begin position="157"/>
        <end position="159"/>
    </location>
</feature>
<feature type="strand" evidence="3">
    <location>
        <begin position="160"/>
        <end position="163"/>
    </location>
</feature>
<feature type="strand" evidence="3">
    <location>
        <begin position="167"/>
        <end position="170"/>
    </location>
</feature>
<feature type="helix" evidence="3">
    <location>
        <begin position="171"/>
        <end position="181"/>
    </location>
</feature>
<feature type="helix" evidence="2">
    <location>
        <begin position="185"/>
        <end position="187"/>
    </location>
</feature>
<feature type="strand" evidence="3">
    <location>
        <begin position="191"/>
        <end position="193"/>
    </location>
</feature>
<feature type="helix" evidence="3">
    <location>
        <begin position="194"/>
        <end position="199"/>
    </location>
</feature>
<feature type="strand" evidence="3">
    <location>
        <begin position="205"/>
        <end position="208"/>
    </location>
</feature>
<feature type="helix" evidence="3">
    <location>
        <begin position="211"/>
        <end position="213"/>
    </location>
</feature>
<feature type="helix" evidence="3">
    <location>
        <begin position="219"/>
        <end position="230"/>
    </location>
</feature>